<gene>
    <name type="primary">kdgK</name>
    <name type="ordered locus">SSO3195</name>
</gene>
<comment type="function">
    <text evidence="1 2 3">Involved in the degradation of glucose and galactose via the semi-phosphorylative Entner-Doudoroff pathway. Catalyzes the phosphorylation of 2-keto-3-deoxygluconate (KDG) and 2-keto-3-deoxygalactonate (KDGal) to produce 2-keto-3-deoxy-6-phosphogluconate (KDPG) and 2-keto-3-deoxy-6-phosphogalactonate (KDPGal), respectively.</text>
</comment>
<comment type="catalytic activity">
    <reaction evidence="1 2 3">
        <text>2-dehydro-3-deoxy-D-gluconate + ATP = 2-dehydro-3-deoxy-6-phospho-D-gluconate + ADP + H(+)</text>
        <dbReference type="Rhea" id="RHEA:14797"/>
        <dbReference type="ChEBI" id="CHEBI:15378"/>
        <dbReference type="ChEBI" id="CHEBI:30616"/>
        <dbReference type="ChEBI" id="CHEBI:57569"/>
        <dbReference type="ChEBI" id="CHEBI:57990"/>
        <dbReference type="ChEBI" id="CHEBI:456216"/>
        <dbReference type="EC" id="2.7.1.178"/>
    </reaction>
</comment>
<comment type="catalytic activity">
    <reaction evidence="1 2 3">
        <text>2-dehydro-3-deoxy-D-galactonate + ATP = 2-dehydro-3-deoxy-6-phospho-D-galactonate + ADP + H(+)</text>
        <dbReference type="Rhea" id="RHEA:16525"/>
        <dbReference type="ChEBI" id="CHEBI:15378"/>
        <dbReference type="ChEBI" id="CHEBI:30616"/>
        <dbReference type="ChEBI" id="CHEBI:57989"/>
        <dbReference type="ChEBI" id="CHEBI:58298"/>
        <dbReference type="ChEBI" id="CHEBI:456216"/>
        <dbReference type="EC" id="2.7.1.178"/>
    </reaction>
</comment>
<comment type="biophysicochemical properties">
    <kinetics>
        <KM evidence="2 3">0.14 mM for KDG (at 70 degrees Celsius and pH 7.2)</KM>
        <KM evidence="2 3">2.8 mM for ATP (at 60 degrees Celsius and pH 7.5)</KM>
        <KM evidence="2 3">3.6 mM for KDG (at 60 degrees Celsius and pH 7.5)</KM>
        <KM evidence="2 3">8.1 mM for KDGal (at 60 degrees Celsius and pH 7.5)</KM>
        <Vmax evidence="2 3">9.7 umol/min/mg enzyme</Vmax>
        <text>kcat is 3.8 sec(-1) for ATP, 5 sec(-1) for KDG and 5.4 sec(-1) for KDGal (at 60 degrees Celsius and pH 7.5).</text>
    </kinetics>
    <phDependence>
        <text evidence="2 3">Optimum pH is between 7 and 8.</text>
    </phDependence>
    <temperatureDependence>
        <text evidence="2 3">Optimum temperature is between 70 and 80 degrees Celsius.</text>
    </temperatureDependence>
</comment>
<comment type="pathway">
    <text>Carbohydrate acid metabolism; 2-dehydro-3-deoxy-D-gluconate degradation; D-glyceraldehyde 3-phosphate and pyruvate from 2-dehydro-3-deoxy-D-gluconate: step 1/2.</text>
</comment>
<comment type="subunit">
    <text evidence="6 7">Homohexamer; trimer of dimers.</text>
</comment>
<comment type="mass spectrometry" mass="34870.0" method="MALDI" evidence="2"/>
<comment type="similarity">
    <text evidence="5">Belongs to the carbohydrate kinase PfkB family.</text>
</comment>
<feature type="chain" id="PRO_0000422663" description="2-dehydro-3-deoxygluconokinase/2-dehydro-3-deoxygalactonokinase">
    <location>
        <begin position="1"/>
        <end position="313"/>
    </location>
</feature>
<feature type="active site" description="Proton acceptor" evidence="7">
    <location>
        <position position="258"/>
    </location>
</feature>
<feature type="binding site" evidence="4">
    <location>
        <begin position="34"/>
        <end position="38"/>
    </location>
    <ligand>
        <name>substrate</name>
    </ligand>
</feature>
<feature type="binding site" evidence="4">
    <location>
        <position position="90"/>
    </location>
    <ligand>
        <name>substrate</name>
    </ligand>
</feature>
<feature type="binding site" evidence="4">
    <location>
        <begin position="106"/>
        <end position="108"/>
    </location>
    <ligand>
        <name>substrate</name>
    </ligand>
</feature>
<feature type="binding site" evidence="4">
    <location>
        <begin position="164"/>
        <end position="166"/>
    </location>
    <ligand>
        <name>ATP</name>
        <dbReference type="ChEBI" id="CHEBI:30616"/>
    </ligand>
</feature>
<feature type="binding site" evidence="4">
    <location>
        <position position="166"/>
    </location>
    <ligand>
        <name>substrate</name>
    </ligand>
</feature>
<feature type="binding site" evidence="4">
    <location>
        <begin position="226"/>
        <end position="231"/>
    </location>
    <ligand>
        <name>ATP</name>
        <dbReference type="ChEBI" id="CHEBI:30616"/>
    </ligand>
</feature>
<feature type="binding site" evidence="4">
    <location>
        <begin position="255"/>
        <end position="258"/>
    </location>
    <ligand>
        <name>ATP</name>
        <dbReference type="ChEBI" id="CHEBI:30616"/>
    </ligand>
</feature>
<feature type="binding site" evidence="4">
    <location>
        <position position="258"/>
    </location>
    <ligand>
        <name>substrate</name>
    </ligand>
</feature>
<feature type="binding site" evidence="4">
    <location>
        <position position="294"/>
    </location>
    <ligand>
        <name>substrate</name>
    </ligand>
</feature>
<feature type="strand" evidence="10">
    <location>
        <begin position="4"/>
        <end position="7"/>
    </location>
</feature>
<feature type="strand" evidence="10">
    <location>
        <begin position="11"/>
        <end position="20"/>
    </location>
</feature>
<feature type="helix" evidence="10">
    <location>
        <begin position="22"/>
        <end position="24"/>
    </location>
</feature>
<feature type="strand" evidence="10">
    <location>
        <begin position="27"/>
        <end position="33"/>
    </location>
</feature>
<feature type="helix" evidence="10">
    <location>
        <begin position="35"/>
        <end position="45"/>
    </location>
</feature>
<feature type="strand" evidence="10">
    <location>
        <begin position="50"/>
        <end position="59"/>
    </location>
</feature>
<feature type="helix" evidence="10">
    <location>
        <begin position="60"/>
        <end position="71"/>
    </location>
</feature>
<feature type="strand" evidence="10">
    <location>
        <begin position="79"/>
        <end position="82"/>
    </location>
</feature>
<feature type="strand" evidence="10">
    <location>
        <begin position="89"/>
        <end position="98"/>
    </location>
</feature>
<feature type="strand" evidence="10">
    <location>
        <begin position="102"/>
        <end position="107"/>
    </location>
</feature>
<feature type="helix" evidence="10">
    <location>
        <begin position="113"/>
        <end position="115"/>
    </location>
</feature>
<feature type="helix" evidence="10">
    <location>
        <begin position="118"/>
        <end position="120"/>
    </location>
</feature>
<feature type="helix" evidence="10">
    <location>
        <begin position="123"/>
        <end position="127"/>
    </location>
</feature>
<feature type="strand" evidence="10">
    <location>
        <begin position="129"/>
        <end position="135"/>
    </location>
</feature>
<feature type="helix" evidence="10">
    <location>
        <begin position="136"/>
        <end position="141"/>
    </location>
</feature>
<feature type="helix" evidence="10">
    <location>
        <begin position="143"/>
        <end position="155"/>
    </location>
</feature>
<feature type="strand" evidence="10">
    <location>
        <begin position="157"/>
        <end position="162"/>
    </location>
</feature>
<feature type="helix" evidence="10">
    <location>
        <begin position="167"/>
        <end position="169"/>
    </location>
</feature>
<feature type="helix" evidence="10">
    <location>
        <begin position="173"/>
        <end position="186"/>
    </location>
</feature>
<feature type="strand" evidence="10">
    <location>
        <begin position="189"/>
        <end position="194"/>
    </location>
</feature>
<feature type="helix" evidence="10">
    <location>
        <begin position="196"/>
        <end position="203"/>
    </location>
</feature>
<feature type="helix" evidence="10">
    <location>
        <begin position="208"/>
        <end position="217"/>
    </location>
</feature>
<feature type="strand" evidence="10">
    <location>
        <begin position="220"/>
        <end position="226"/>
    </location>
</feature>
<feature type="helix" evidence="10">
    <location>
        <begin position="228"/>
        <end position="230"/>
    </location>
</feature>
<feature type="strand" evidence="10">
    <location>
        <begin position="232"/>
        <end position="236"/>
    </location>
</feature>
<feature type="strand" evidence="10">
    <location>
        <begin position="239"/>
        <end position="243"/>
    </location>
</feature>
<feature type="helix" evidence="10">
    <location>
        <begin position="256"/>
        <end position="269"/>
    </location>
</feature>
<feature type="helix" evidence="10">
    <location>
        <begin position="274"/>
        <end position="289"/>
    </location>
</feature>
<feature type="strand" evidence="10">
    <location>
        <begin position="291"/>
        <end position="295"/>
    </location>
</feature>
<feature type="helix" evidence="10">
    <location>
        <begin position="301"/>
        <end position="310"/>
    </location>
</feature>
<protein>
    <recommendedName>
        <fullName>2-dehydro-3-deoxygluconokinase/2-dehydro-3-deoxygalactonokinase</fullName>
        <shortName>2-dehydro-3-deoxyglucono/galactono-kinase</shortName>
        <ecNumber evidence="1 2 3">2.7.1.178</ecNumber>
    </recommendedName>
    <alternativeName>
        <fullName>2-keto-3-deoxy-galactonokinase</fullName>
    </alternativeName>
    <alternativeName>
        <fullName>2-keto-3-deoxygluconokinase</fullName>
    </alternativeName>
    <alternativeName>
        <fullName>3-deoxy-2-oxo-D-gluconate kinase</fullName>
    </alternativeName>
    <alternativeName>
        <fullName>KDG kinase</fullName>
    </alternativeName>
    <alternativeName>
        <fullName>KDGal kinase</fullName>
    </alternativeName>
</protein>
<accession>Q97U29</accession>
<organism>
    <name type="scientific">Saccharolobus solfataricus (strain ATCC 35092 / DSM 1617 / JCM 11322 / P2)</name>
    <name type="common">Sulfolobus solfataricus</name>
    <dbReference type="NCBI Taxonomy" id="273057"/>
    <lineage>
        <taxon>Archaea</taxon>
        <taxon>Thermoproteota</taxon>
        <taxon>Thermoprotei</taxon>
        <taxon>Sulfolobales</taxon>
        <taxon>Sulfolobaceae</taxon>
        <taxon>Saccharolobus</taxon>
    </lineage>
</organism>
<evidence type="ECO:0000269" key="1">
    <source>
    </source>
</evidence>
<evidence type="ECO:0000269" key="2">
    <source>
    </source>
</evidence>
<evidence type="ECO:0000269" key="3">
    <source>
    </source>
</evidence>
<evidence type="ECO:0000269" key="4">
    <source>
    </source>
</evidence>
<evidence type="ECO:0000305" key="5"/>
<evidence type="ECO:0000305" key="6">
    <source>
    </source>
</evidence>
<evidence type="ECO:0000305" key="7">
    <source>
    </source>
</evidence>
<evidence type="ECO:0007744" key="8">
    <source>
        <dbReference type="PDB" id="2V78"/>
    </source>
</evidence>
<evidence type="ECO:0007744" key="9">
    <source>
        <dbReference type="PDB" id="2VAR"/>
    </source>
</evidence>
<evidence type="ECO:0007829" key="10">
    <source>
        <dbReference type="PDB" id="2V78"/>
    </source>
</evidence>
<reference key="1">
    <citation type="journal article" date="2001" name="Proc. Natl. Acad. Sci. U.S.A.">
        <title>The complete genome of the crenarchaeon Sulfolobus solfataricus P2.</title>
        <authorList>
            <person name="She Q."/>
            <person name="Singh R.K."/>
            <person name="Confalonieri F."/>
            <person name="Zivanovic Y."/>
            <person name="Allard G."/>
            <person name="Awayez M.J."/>
            <person name="Chan-Weiher C.C.-Y."/>
            <person name="Clausen I.G."/>
            <person name="Curtis B.A."/>
            <person name="De Moors A."/>
            <person name="Erauso G."/>
            <person name="Fletcher C."/>
            <person name="Gordon P.M.K."/>
            <person name="Heikamp-de Jong I."/>
            <person name="Jeffries A.C."/>
            <person name="Kozera C.J."/>
            <person name="Medina N."/>
            <person name="Peng X."/>
            <person name="Thi-Ngoc H.P."/>
            <person name="Redder P."/>
            <person name="Schenk M.E."/>
            <person name="Theriault C."/>
            <person name="Tolstrup N."/>
            <person name="Charlebois R.L."/>
            <person name="Doolittle W.F."/>
            <person name="Duguet M."/>
            <person name="Gaasterland T."/>
            <person name="Garrett R.A."/>
            <person name="Ragan M.A."/>
            <person name="Sensen C.W."/>
            <person name="Van der Oost J."/>
        </authorList>
    </citation>
    <scope>NUCLEOTIDE SEQUENCE [LARGE SCALE GENOMIC DNA]</scope>
    <source>
        <strain>ATCC 35092 / DSM 1617 / JCM 11322 / P2</strain>
    </source>
</reference>
<reference key="2">
    <citation type="journal article" date="2005" name="Biochem. J.">
        <title>The semi-phosphorylative Entner-Doudoroff pathway in hyperthermophilic archaea: a re-evaluation.</title>
        <authorList>
            <person name="Ahmed H."/>
            <person name="Ettema T.J."/>
            <person name="Tjaden B."/>
            <person name="Geerling A.C."/>
            <person name="van der Oost J."/>
            <person name="Siebers B."/>
        </authorList>
    </citation>
    <scope>FUNCTION</scope>
    <scope>CATALYTIC ACTIVITY</scope>
    <source>
        <strain>ATCC 35092 / DSM 1617 / JCM 11322 / P2</strain>
    </source>
</reference>
<reference key="3">
    <citation type="journal article" date="2005" name="FEBS Lett.">
        <title>Promiscuity in the part-phosphorylative Entner-Doudoroff pathway of the archaeon Sulfolobus solfataricus.</title>
        <authorList>
            <person name="Lamble H.J."/>
            <person name="Theodossis A."/>
            <person name="Milburn C.C."/>
            <person name="Taylor G.L."/>
            <person name="Bull S.D."/>
            <person name="Hough D.W."/>
            <person name="Danson M.J."/>
        </authorList>
    </citation>
    <scope>FUNCTION</scope>
    <scope>CATALYTIC ACTIVITY</scope>
    <scope>MASS SPECTROMETRY</scope>
    <scope>BIOPHYSICOCHEMICAL PROPERTIES</scope>
    <scope>SUBSTRATE SPECIFICITY</scope>
    <source>
        <strain>ATCC 35092 / DSM 1617 / JCM 11322 / P2</strain>
    </source>
</reference>
<reference key="4">
    <citation type="journal article" date="2006" name="Biosci. Biotechnol. Biochem.">
        <title>Characterization of Sulfolobus solfataricus 2-keto-3-deoxy-D-gluconate kinase in the modified Entner-Doudoroff pathway.</title>
        <authorList>
            <person name="Kim S."/>
            <person name="Lee S.B."/>
        </authorList>
    </citation>
    <scope>FUNCTION</scope>
    <scope>CATALYTIC ACTIVITY</scope>
    <scope>BIOPHYSICOCHEMICAL PROPERTIES</scope>
    <scope>SUBUNIT</scope>
    <source>
        <strain>ATCC 35092 / DSM 1617 / JCM 11322 / P2</strain>
    </source>
</reference>
<reference evidence="8 9" key="5">
    <citation type="journal article" date="2008" name="Acta Crystallogr. D">
        <title>The structure of Sulfolobus solfataricus 2-keto-3-deoxygluconate kinase.</title>
        <authorList>
            <person name="Potter J.A."/>
            <person name="Kerou M."/>
            <person name="Lamble H.J."/>
            <person name="Bull S.D."/>
            <person name="Hough D.W."/>
            <person name="Danson M.J."/>
            <person name="Taylor G.L."/>
        </authorList>
    </citation>
    <scope>X-RAY CRYSTALLOGRAPHY (2.00 ANGSTROMS) IN COMPLEX WITH ATP ANALOGS AND 2-KETO-3-DEOXYGLUCONATE</scope>
    <scope>ACTIVE SITE</scope>
    <scope>SUBUNIT</scope>
</reference>
<keyword id="KW-0002">3D-structure</keyword>
<keyword id="KW-0067">ATP-binding</keyword>
<keyword id="KW-0119">Carbohydrate metabolism</keyword>
<keyword id="KW-0418">Kinase</keyword>
<keyword id="KW-0547">Nucleotide-binding</keyword>
<keyword id="KW-1185">Reference proteome</keyword>
<keyword id="KW-0808">Transferase</keyword>
<dbReference type="EC" id="2.7.1.178" evidence="1 2 3"/>
<dbReference type="EMBL" id="AE006641">
    <property type="protein sequence ID" value="AAK43293.1"/>
    <property type="molecule type" value="Genomic_DNA"/>
</dbReference>
<dbReference type="PIR" id="F90504">
    <property type="entry name" value="F90504"/>
</dbReference>
<dbReference type="RefSeq" id="WP_009991690.1">
    <property type="nucleotide sequence ID" value="NC_002754.1"/>
</dbReference>
<dbReference type="PDB" id="2V78">
    <property type="method" value="X-ray"/>
    <property type="resolution" value="2.00 A"/>
    <property type="chains" value="A/B/C=1-313"/>
</dbReference>
<dbReference type="PDB" id="2VAR">
    <property type="method" value="X-ray"/>
    <property type="resolution" value="2.10 A"/>
    <property type="chains" value="A/B/C=1-313"/>
</dbReference>
<dbReference type="PDBsum" id="2V78"/>
<dbReference type="PDBsum" id="2VAR"/>
<dbReference type="SMR" id="Q97U29"/>
<dbReference type="FunCoup" id="Q97U29">
    <property type="interactions" value="130"/>
</dbReference>
<dbReference type="STRING" id="273057.SSO3195"/>
<dbReference type="PaxDb" id="273057-SSO3195"/>
<dbReference type="EnsemblBacteria" id="AAK43293">
    <property type="protein sequence ID" value="AAK43293"/>
    <property type="gene ID" value="SSO3195"/>
</dbReference>
<dbReference type="GeneID" id="44128912"/>
<dbReference type="KEGG" id="sso:SSO3195"/>
<dbReference type="PATRIC" id="fig|273057.12.peg.3299"/>
<dbReference type="eggNOG" id="arCOG00014">
    <property type="taxonomic scope" value="Archaea"/>
</dbReference>
<dbReference type="HOGENOM" id="CLU_027634_6_0_2"/>
<dbReference type="InParanoid" id="Q97U29"/>
<dbReference type="PhylomeDB" id="Q97U29"/>
<dbReference type="BioCyc" id="MetaCyc:MONOMER-17931"/>
<dbReference type="BRENDA" id="2.7.1.178">
    <property type="organism ID" value="6163"/>
</dbReference>
<dbReference type="UniPathway" id="UPA00856">
    <property type="reaction ID" value="UER00828"/>
</dbReference>
<dbReference type="EvolutionaryTrace" id="Q97U29"/>
<dbReference type="Proteomes" id="UP000001974">
    <property type="component" value="Chromosome"/>
</dbReference>
<dbReference type="GO" id="GO:0008671">
    <property type="term" value="F:2-dehydro-3-deoxygalactonokinase activity"/>
    <property type="evidence" value="ECO:0000314"/>
    <property type="project" value="UniProtKB"/>
</dbReference>
<dbReference type="GO" id="GO:0008673">
    <property type="term" value="F:2-dehydro-3-deoxygluconokinase activity"/>
    <property type="evidence" value="ECO:0000314"/>
    <property type="project" value="UniProtKB"/>
</dbReference>
<dbReference type="GO" id="GO:0005524">
    <property type="term" value="F:ATP binding"/>
    <property type="evidence" value="ECO:0000314"/>
    <property type="project" value="UniProtKB"/>
</dbReference>
<dbReference type="GO" id="GO:0000166">
    <property type="term" value="F:nucleotide binding"/>
    <property type="evidence" value="ECO:0000314"/>
    <property type="project" value="UniProtKB"/>
</dbReference>
<dbReference type="GO" id="GO:0016310">
    <property type="term" value="P:phosphorylation"/>
    <property type="evidence" value="ECO:0000314"/>
    <property type="project" value="UniProtKB"/>
</dbReference>
<dbReference type="CDD" id="cd01166">
    <property type="entry name" value="KdgK"/>
    <property type="match status" value="1"/>
</dbReference>
<dbReference type="FunFam" id="3.40.1190.20:FF:000088">
    <property type="entry name" value="2-dehydro-3-deoxygluconokinase"/>
    <property type="match status" value="1"/>
</dbReference>
<dbReference type="Gene3D" id="3.40.1190.20">
    <property type="match status" value="1"/>
</dbReference>
<dbReference type="InterPro" id="IPR054939">
    <property type="entry name" value="KDG_KDGal_kin"/>
</dbReference>
<dbReference type="InterPro" id="IPR050306">
    <property type="entry name" value="PfkB_Carbo_kinase"/>
</dbReference>
<dbReference type="InterPro" id="IPR011611">
    <property type="entry name" value="PfkB_dom"/>
</dbReference>
<dbReference type="InterPro" id="IPR029056">
    <property type="entry name" value="Ribokinase-like"/>
</dbReference>
<dbReference type="NCBIfam" id="NF040938">
    <property type="entry name" value="KDG_KDGal_kin"/>
    <property type="match status" value="1"/>
</dbReference>
<dbReference type="PANTHER" id="PTHR43085">
    <property type="entry name" value="HEXOKINASE FAMILY MEMBER"/>
    <property type="match status" value="1"/>
</dbReference>
<dbReference type="PANTHER" id="PTHR43085:SF1">
    <property type="entry name" value="PSEUDOURIDINE KINASE-RELATED"/>
    <property type="match status" value="1"/>
</dbReference>
<dbReference type="Pfam" id="PF00294">
    <property type="entry name" value="PfkB"/>
    <property type="match status" value="1"/>
</dbReference>
<dbReference type="SUPFAM" id="SSF53613">
    <property type="entry name" value="Ribokinase-like"/>
    <property type="match status" value="1"/>
</dbReference>
<name>KDGK_SACS2</name>
<proteinExistence type="evidence at protein level"/>
<sequence length="313" mass="34875">MVDVIALGEPLIQFNSFNPGPLRFVNYFEKHVAGSELNFCIAVVRNHLSCSLIARVGNDEFGKNIIEYSRAQGIDTSHIKVDNESFTGIYFIQRGYPIPMKSELVYYRKGSAGSRLSPEDINENYVRNSRLVHSTGITLAISDNAKEAVIKAFELAKSRSLDTNIRPKLWSSLEKAKETILSILKKYDIEVLITDPDDTKILLDVTDPDEAYRKYKELGVKVLLYKLGSKGAIAYKDNVKAFKDAYKVPVEDPTGAGDAMAGTFVSLYLQGKDIEYSLAHGIAASTLVITVRGDNELTPTLEDAERFLNEFKT</sequence>